<feature type="chain" id="PRO_0000324055" description="Light-independent protochlorophyllide reductase iron-sulfur ATP-binding protein">
    <location>
        <begin position="1"/>
        <end position="301"/>
    </location>
</feature>
<feature type="region of interest" description="Disordered" evidence="2">
    <location>
        <begin position="1"/>
        <end position="26"/>
    </location>
</feature>
<feature type="binding site" evidence="1">
    <location>
        <begin position="44"/>
        <end position="49"/>
    </location>
    <ligand>
        <name>ATP</name>
        <dbReference type="ChEBI" id="CHEBI:30616"/>
    </ligand>
</feature>
<feature type="binding site" evidence="1">
    <location>
        <position position="48"/>
    </location>
    <ligand>
        <name>Mg(2+)</name>
        <dbReference type="ChEBI" id="CHEBI:18420"/>
    </ligand>
</feature>
<feature type="binding site" evidence="1">
    <location>
        <position position="73"/>
    </location>
    <ligand>
        <name>ATP</name>
        <dbReference type="ChEBI" id="CHEBI:30616"/>
    </ligand>
</feature>
<feature type="binding site" evidence="1">
    <location>
        <position position="129"/>
    </location>
    <ligand>
        <name>[4Fe-4S] cluster</name>
        <dbReference type="ChEBI" id="CHEBI:49883"/>
        <note>ligand shared between dimeric partners</note>
    </ligand>
</feature>
<feature type="binding site" evidence="1">
    <location>
        <position position="163"/>
    </location>
    <ligand>
        <name>[4Fe-4S] cluster</name>
        <dbReference type="ChEBI" id="CHEBI:49883"/>
        <note>ligand shared between dimeric partners</note>
    </ligand>
</feature>
<feature type="binding site" evidence="1">
    <location>
        <begin position="214"/>
        <end position="215"/>
    </location>
    <ligand>
        <name>ATP</name>
        <dbReference type="ChEBI" id="CHEBI:30616"/>
    </ligand>
</feature>
<name>BCHL_HALHL</name>
<keyword id="KW-0004">4Fe-4S</keyword>
<keyword id="KW-0067">ATP-binding</keyword>
<keyword id="KW-0077">Bacteriochlorophyll biosynthesis</keyword>
<keyword id="KW-0149">Chlorophyll biosynthesis</keyword>
<keyword id="KW-0408">Iron</keyword>
<keyword id="KW-0411">Iron-sulfur</keyword>
<keyword id="KW-0460">Magnesium</keyword>
<keyword id="KW-0479">Metal-binding</keyword>
<keyword id="KW-0547">Nucleotide-binding</keyword>
<keyword id="KW-0560">Oxidoreductase</keyword>
<keyword id="KW-0602">Photosynthesis</keyword>
<keyword id="KW-1185">Reference proteome</keyword>
<protein>
    <recommendedName>
        <fullName evidence="1">Light-independent protochlorophyllide reductase iron-sulfur ATP-binding protein</fullName>
        <shortName evidence="1">DPOR subunit L</shortName>
        <shortName evidence="1">LI-POR subunit L</shortName>
        <ecNumber evidence="1">1.3.7.7</ecNumber>
    </recommendedName>
</protein>
<reference key="1">
    <citation type="submission" date="2006-12" db="EMBL/GenBank/DDBJ databases">
        <title>Complete sequence of Halorhodospira halophila SL1.</title>
        <authorList>
            <consortium name="US DOE Joint Genome Institute"/>
            <person name="Copeland A."/>
            <person name="Lucas S."/>
            <person name="Lapidus A."/>
            <person name="Barry K."/>
            <person name="Detter J.C."/>
            <person name="Glavina del Rio T."/>
            <person name="Hammon N."/>
            <person name="Israni S."/>
            <person name="Dalin E."/>
            <person name="Tice H."/>
            <person name="Pitluck S."/>
            <person name="Saunders E."/>
            <person name="Brettin T."/>
            <person name="Bruce D."/>
            <person name="Han C."/>
            <person name="Tapia R."/>
            <person name="Schmutz J."/>
            <person name="Larimer F."/>
            <person name="Land M."/>
            <person name="Hauser L."/>
            <person name="Kyrpides N."/>
            <person name="Mikhailova N."/>
            <person name="Hoff W."/>
            <person name="Richardson P."/>
        </authorList>
    </citation>
    <scope>NUCLEOTIDE SEQUENCE [LARGE SCALE GENOMIC DNA]</scope>
    <source>
        <strain>DSM 244 / SL1</strain>
    </source>
</reference>
<dbReference type="EC" id="1.3.7.7" evidence="1"/>
<dbReference type="EMBL" id="CP000544">
    <property type="protein sequence ID" value="ABM62398.1"/>
    <property type="molecule type" value="Genomic_DNA"/>
</dbReference>
<dbReference type="RefSeq" id="WP_011814420.1">
    <property type="nucleotide sequence ID" value="NC_008789.1"/>
</dbReference>
<dbReference type="SMR" id="A1WXI6"/>
<dbReference type="STRING" id="349124.Hhal_1634"/>
<dbReference type="KEGG" id="hha:Hhal_1634"/>
<dbReference type="eggNOG" id="COG1348">
    <property type="taxonomic scope" value="Bacteria"/>
</dbReference>
<dbReference type="HOGENOM" id="CLU_059373_2_0_6"/>
<dbReference type="OrthoDB" id="9815116at2"/>
<dbReference type="UniPathway" id="UPA00671"/>
<dbReference type="Proteomes" id="UP000000647">
    <property type="component" value="Chromosome"/>
</dbReference>
<dbReference type="GO" id="GO:0051539">
    <property type="term" value="F:4 iron, 4 sulfur cluster binding"/>
    <property type="evidence" value="ECO:0007669"/>
    <property type="project" value="UniProtKB-UniRule"/>
</dbReference>
<dbReference type="GO" id="GO:0005524">
    <property type="term" value="F:ATP binding"/>
    <property type="evidence" value="ECO:0007669"/>
    <property type="project" value="UniProtKB-UniRule"/>
</dbReference>
<dbReference type="GO" id="GO:0046872">
    <property type="term" value="F:metal ion binding"/>
    <property type="evidence" value="ECO:0007669"/>
    <property type="project" value="UniProtKB-KW"/>
</dbReference>
<dbReference type="GO" id="GO:0016730">
    <property type="term" value="F:oxidoreductase activity, acting on iron-sulfur proteins as donors"/>
    <property type="evidence" value="ECO:0007669"/>
    <property type="project" value="InterPro"/>
</dbReference>
<dbReference type="GO" id="GO:0016636">
    <property type="term" value="F:oxidoreductase activity, acting on the CH-CH group of donors, iron-sulfur protein as acceptor"/>
    <property type="evidence" value="ECO:0007669"/>
    <property type="project" value="UniProtKB-UniRule"/>
</dbReference>
<dbReference type="GO" id="GO:0036070">
    <property type="term" value="P:light-independent bacteriochlorophyll biosynthetic process"/>
    <property type="evidence" value="ECO:0007669"/>
    <property type="project" value="UniProtKB-UniRule"/>
</dbReference>
<dbReference type="GO" id="GO:0019685">
    <property type="term" value="P:photosynthesis, dark reaction"/>
    <property type="evidence" value="ECO:0007669"/>
    <property type="project" value="InterPro"/>
</dbReference>
<dbReference type="CDD" id="cd02032">
    <property type="entry name" value="Bchl-like"/>
    <property type="match status" value="1"/>
</dbReference>
<dbReference type="Gene3D" id="3.40.50.300">
    <property type="entry name" value="P-loop containing nucleotide triphosphate hydrolases"/>
    <property type="match status" value="1"/>
</dbReference>
<dbReference type="HAMAP" id="MF_00355">
    <property type="entry name" value="ChlL_BchL"/>
    <property type="match status" value="1"/>
</dbReference>
<dbReference type="InterPro" id="IPR030655">
    <property type="entry name" value="NifH/chlL_CS"/>
</dbReference>
<dbReference type="InterPro" id="IPR000392">
    <property type="entry name" value="NifH/frxC"/>
</dbReference>
<dbReference type="InterPro" id="IPR027417">
    <property type="entry name" value="P-loop_NTPase"/>
</dbReference>
<dbReference type="InterPro" id="IPR005971">
    <property type="entry name" value="Protochlorophyllide_ATP-bd"/>
</dbReference>
<dbReference type="NCBIfam" id="TIGR01281">
    <property type="entry name" value="DPOR_bchL"/>
    <property type="match status" value="1"/>
</dbReference>
<dbReference type="PANTHER" id="PTHR42864">
    <property type="entry name" value="LIGHT-INDEPENDENT PROTOCHLOROPHYLLIDE REDUCTASE IRON-SULFUR ATP-BINDING PROTEIN"/>
    <property type="match status" value="1"/>
</dbReference>
<dbReference type="PANTHER" id="PTHR42864:SF2">
    <property type="entry name" value="LIGHT-INDEPENDENT PROTOCHLOROPHYLLIDE REDUCTASE IRON-SULFUR ATP-BINDING PROTEIN"/>
    <property type="match status" value="1"/>
</dbReference>
<dbReference type="Pfam" id="PF00142">
    <property type="entry name" value="Fer4_NifH"/>
    <property type="match status" value="1"/>
</dbReference>
<dbReference type="PIRSF" id="PIRSF000363">
    <property type="entry name" value="Nitrogenase_iron"/>
    <property type="match status" value="1"/>
</dbReference>
<dbReference type="PRINTS" id="PR00091">
    <property type="entry name" value="NITROGNASEII"/>
</dbReference>
<dbReference type="SUPFAM" id="SSF52540">
    <property type="entry name" value="P-loop containing nucleoside triphosphate hydrolases"/>
    <property type="match status" value="1"/>
</dbReference>
<dbReference type="PROSITE" id="PS00746">
    <property type="entry name" value="NIFH_FRXC_1"/>
    <property type="match status" value="1"/>
</dbReference>
<dbReference type="PROSITE" id="PS00692">
    <property type="entry name" value="NIFH_FRXC_2"/>
    <property type="match status" value="1"/>
</dbReference>
<dbReference type="PROSITE" id="PS51026">
    <property type="entry name" value="NIFH_FRXC_3"/>
    <property type="match status" value="1"/>
</dbReference>
<sequence length="301" mass="32650">MSNGSVPVSGIGGRGDGEGSSQVHMESTGGMDRAKVFAVYGKGGIGKSTTSSNLAVAFSQLGKRVLQIGCDPKHDSTFTLTKRLVPTVIDSLEEVDFHMEELRPEDYVYEGYNGVLCVEAGGPPAGTGCGGYVVGQTVKLLKQHHLLEETDVVIFDVLGDVVCGGFAAPLQHADQALIVTANDFDSIFAMNRIAGAIQAKAKNYKVRLGGVIANRSERTDQIDRINERIGLRTLAHVPNYDVVRRSRLHKSTLFELEEQSEELERVRDEYLSLAAALWNGVDPLSPSPLKDREVFDLLGFD</sequence>
<accession>A1WXI6</accession>
<comment type="function">
    <text evidence="1">Component of the dark-operative protochlorophyllide reductase (DPOR) that uses Mg-ATP and reduced ferredoxin to reduce ring D of protochlorophyllide (Pchlide) to form chlorophyllide a (Chlide). This reaction is light-independent. The L component serves as a unique electron donor to the NB-component of the complex, and binds Mg-ATP.</text>
</comment>
<comment type="catalytic activity">
    <reaction evidence="1">
        <text>chlorophyllide a + oxidized 2[4Fe-4S]-[ferredoxin] + 2 ADP + 2 phosphate = protochlorophyllide a + reduced 2[4Fe-4S]-[ferredoxin] + 2 ATP + 2 H2O</text>
        <dbReference type="Rhea" id="RHEA:28202"/>
        <dbReference type="Rhea" id="RHEA-COMP:10002"/>
        <dbReference type="Rhea" id="RHEA-COMP:10004"/>
        <dbReference type="ChEBI" id="CHEBI:15377"/>
        <dbReference type="ChEBI" id="CHEBI:30616"/>
        <dbReference type="ChEBI" id="CHEBI:33722"/>
        <dbReference type="ChEBI" id="CHEBI:33723"/>
        <dbReference type="ChEBI" id="CHEBI:43474"/>
        <dbReference type="ChEBI" id="CHEBI:83348"/>
        <dbReference type="ChEBI" id="CHEBI:83350"/>
        <dbReference type="ChEBI" id="CHEBI:456216"/>
        <dbReference type="EC" id="1.3.7.7"/>
    </reaction>
</comment>
<comment type="cofactor">
    <cofactor evidence="1">
        <name>[4Fe-4S] cluster</name>
        <dbReference type="ChEBI" id="CHEBI:49883"/>
    </cofactor>
    <text evidence="1">Binds 1 [4Fe-4S] cluster per dimer.</text>
</comment>
<comment type="pathway">
    <text evidence="1">Porphyrin-containing compound metabolism; bacteriochlorophyll biosynthesis (light-independent).</text>
</comment>
<comment type="subunit">
    <text evidence="1">Homodimer. Protochlorophyllide reductase is composed of three subunits; BchL, BchN and BchB.</text>
</comment>
<comment type="similarity">
    <text evidence="1">Belongs to the NifH/BchL/ChlL family.</text>
</comment>
<gene>
    <name evidence="1" type="primary">bchL</name>
    <name type="ordered locus">Hhal_1634</name>
</gene>
<proteinExistence type="inferred from homology"/>
<evidence type="ECO:0000255" key="1">
    <source>
        <dbReference type="HAMAP-Rule" id="MF_00355"/>
    </source>
</evidence>
<evidence type="ECO:0000256" key="2">
    <source>
        <dbReference type="SAM" id="MobiDB-lite"/>
    </source>
</evidence>
<organism>
    <name type="scientific">Halorhodospira halophila (strain DSM 244 / SL1)</name>
    <name type="common">Ectothiorhodospira halophila (strain DSM 244 / SL1)</name>
    <dbReference type="NCBI Taxonomy" id="349124"/>
    <lineage>
        <taxon>Bacteria</taxon>
        <taxon>Pseudomonadati</taxon>
        <taxon>Pseudomonadota</taxon>
        <taxon>Gammaproteobacteria</taxon>
        <taxon>Chromatiales</taxon>
        <taxon>Ectothiorhodospiraceae</taxon>
        <taxon>Halorhodospira</taxon>
    </lineage>
</organism>